<feature type="chain" id="PRO_0000298219" description="Cell division topological specificity factor">
    <location>
        <begin position="1"/>
        <end position="85"/>
    </location>
</feature>
<comment type="function">
    <text evidence="1">Prevents the cell division inhibition by proteins MinC and MinD at internal division sites while permitting inhibition at polar sites. This ensures cell division at the proper site by restricting the formation of a division septum at the midpoint of the long axis of the cell.</text>
</comment>
<comment type="similarity">
    <text evidence="1">Belongs to the MinE family.</text>
</comment>
<protein>
    <recommendedName>
        <fullName evidence="1">Cell division topological specificity factor</fullName>
    </recommendedName>
</protein>
<gene>
    <name evidence="1" type="primary">minE</name>
    <name type="ordered locus">XCV1256</name>
</gene>
<proteinExistence type="inferred from homology"/>
<accession>Q3BW76</accession>
<organism>
    <name type="scientific">Xanthomonas euvesicatoria pv. vesicatoria (strain 85-10)</name>
    <name type="common">Xanthomonas campestris pv. vesicatoria</name>
    <dbReference type="NCBI Taxonomy" id="316273"/>
    <lineage>
        <taxon>Bacteria</taxon>
        <taxon>Pseudomonadati</taxon>
        <taxon>Pseudomonadota</taxon>
        <taxon>Gammaproteobacteria</taxon>
        <taxon>Lysobacterales</taxon>
        <taxon>Lysobacteraceae</taxon>
        <taxon>Xanthomonas</taxon>
    </lineage>
</organism>
<evidence type="ECO:0000255" key="1">
    <source>
        <dbReference type="HAMAP-Rule" id="MF_00262"/>
    </source>
</evidence>
<name>MINE_XANE5</name>
<reference key="1">
    <citation type="journal article" date="2005" name="J. Bacteriol.">
        <title>Insights into genome plasticity and pathogenicity of the plant pathogenic Bacterium Xanthomonas campestris pv. vesicatoria revealed by the complete genome sequence.</title>
        <authorList>
            <person name="Thieme F."/>
            <person name="Koebnik R."/>
            <person name="Bekel T."/>
            <person name="Berger C."/>
            <person name="Boch J."/>
            <person name="Buettner D."/>
            <person name="Caldana C."/>
            <person name="Gaigalat L."/>
            <person name="Goesmann A."/>
            <person name="Kay S."/>
            <person name="Kirchner O."/>
            <person name="Lanz C."/>
            <person name="Linke B."/>
            <person name="McHardy A.C."/>
            <person name="Meyer F."/>
            <person name="Mittenhuber G."/>
            <person name="Nies D.H."/>
            <person name="Niesbach-Kloesgen U."/>
            <person name="Patschkowski T."/>
            <person name="Rueckert C."/>
            <person name="Rupp O."/>
            <person name="Schneiker S."/>
            <person name="Schuster S.C."/>
            <person name="Vorhoelter F.J."/>
            <person name="Weber E."/>
            <person name="Puehler A."/>
            <person name="Bonas U."/>
            <person name="Bartels D."/>
            <person name="Kaiser O."/>
        </authorList>
    </citation>
    <scope>NUCLEOTIDE SEQUENCE [LARGE SCALE GENOMIC DNA]</scope>
    <source>
        <strain>85-10</strain>
    </source>
</reference>
<dbReference type="EMBL" id="AM039952">
    <property type="protein sequence ID" value="CAJ22887.1"/>
    <property type="molecule type" value="Genomic_DNA"/>
</dbReference>
<dbReference type="RefSeq" id="WP_003484370.1">
    <property type="nucleotide sequence ID" value="NZ_CP017190.1"/>
</dbReference>
<dbReference type="SMR" id="Q3BW76"/>
<dbReference type="STRING" id="456327.BJD11_16335"/>
<dbReference type="GeneID" id="97509569"/>
<dbReference type="KEGG" id="xcv:XCV1256"/>
<dbReference type="eggNOG" id="COG0851">
    <property type="taxonomic scope" value="Bacteria"/>
</dbReference>
<dbReference type="HOGENOM" id="CLU_137929_2_1_6"/>
<dbReference type="Proteomes" id="UP000007069">
    <property type="component" value="Chromosome"/>
</dbReference>
<dbReference type="GO" id="GO:0051301">
    <property type="term" value="P:cell division"/>
    <property type="evidence" value="ECO:0007669"/>
    <property type="project" value="UniProtKB-KW"/>
</dbReference>
<dbReference type="GO" id="GO:0032955">
    <property type="term" value="P:regulation of division septum assembly"/>
    <property type="evidence" value="ECO:0007669"/>
    <property type="project" value="InterPro"/>
</dbReference>
<dbReference type="FunFam" id="3.30.1070.10:FF:000001">
    <property type="entry name" value="Cell division topological specificity factor"/>
    <property type="match status" value="1"/>
</dbReference>
<dbReference type="Gene3D" id="3.30.1070.10">
    <property type="entry name" value="Cell division topological specificity factor MinE"/>
    <property type="match status" value="1"/>
</dbReference>
<dbReference type="HAMAP" id="MF_00262">
    <property type="entry name" value="MinE"/>
    <property type="match status" value="1"/>
</dbReference>
<dbReference type="InterPro" id="IPR005527">
    <property type="entry name" value="MinE"/>
</dbReference>
<dbReference type="InterPro" id="IPR036707">
    <property type="entry name" value="MinE_sf"/>
</dbReference>
<dbReference type="NCBIfam" id="TIGR01215">
    <property type="entry name" value="minE"/>
    <property type="match status" value="1"/>
</dbReference>
<dbReference type="NCBIfam" id="NF001422">
    <property type="entry name" value="PRK00296.1"/>
    <property type="match status" value="1"/>
</dbReference>
<dbReference type="Pfam" id="PF03776">
    <property type="entry name" value="MinE"/>
    <property type="match status" value="1"/>
</dbReference>
<dbReference type="SUPFAM" id="SSF55229">
    <property type="entry name" value="Cell division protein MinE topological specificity domain"/>
    <property type="match status" value="1"/>
</dbReference>
<sequence length="85" mass="9598">MGLLDFLKSKKNTAETAKNRLQIIIAQERNHRGGPDYLPLMQRELLEVIKKYVNIDADAVRVDLVKDGEHDVLDISVALPEDGDK</sequence>
<keyword id="KW-0131">Cell cycle</keyword>
<keyword id="KW-0132">Cell division</keyword>